<comment type="function">
    <text evidence="1">Involved in protein export. Acts as a chaperone by maintaining the newly synthesized protein in an open conformation. Functions as a peptidyl-prolyl cis-trans isomerase.</text>
</comment>
<comment type="catalytic activity">
    <reaction evidence="1">
        <text>[protein]-peptidylproline (omega=180) = [protein]-peptidylproline (omega=0)</text>
        <dbReference type="Rhea" id="RHEA:16237"/>
        <dbReference type="Rhea" id="RHEA-COMP:10747"/>
        <dbReference type="Rhea" id="RHEA-COMP:10748"/>
        <dbReference type="ChEBI" id="CHEBI:83833"/>
        <dbReference type="ChEBI" id="CHEBI:83834"/>
        <dbReference type="EC" id="5.2.1.8"/>
    </reaction>
</comment>
<comment type="subcellular location">
    <subcellularLocation>
        <location>Cytoplasm</location>
    </subcellularLocation>
    <text evidence="1">About half TF is bound to the ribosome near the polypeptide exit tunnel while the other half is free in the cytoplasm.</text>
</comment>
<comment type="domain">
    <text evidence="1">Consists of 3 domains; the N-terminus binds the ribosome, the middle domain has PPIase activity, while the C-terminus has intrinsic chaperone activity on its own.</text>
</comment>
<comment type="similarity">
    <text evidence="1">Belongs to the FKBP-type PPIase family. Tig subfamily.</text>
</comment>
<proteinExistence type="inferred from homology"/>
<reference key="1">
    <citation type="submission" date="2005-08" db="EMBL/GenBank/DDBJ databases">
        <title>Complete sequence of chromosome 1 of Nitrosospira multiformis ATCC 25196.</title>
        <authorList>
            <person name="Copeland A."/>
            <person name="Lucas S."/>
            <person name="Lapidus A."/>
            <person name="Barry K."/>
            <person name="Detter J.C."/>
            <person name="Glavina T."/>
            <person name="Hammon N."/>
            <person name="Israni S."/>
            <person name="Pitluck S."/>
            <person name="Chain P."/>
            <person name="Malfatti S."/>
            <person name="Shin M."/>
            <person name="Vergez L."/>
            <person name="Schmutz J."/>
            <person name="Larimer F."/>
            <person name="Land M."/>
            <person name="Hauser L."/>
            <person name="Kyrpides N."/>
            <person name="Lykidis A."/>
            <person name="Richardson P."/>
        </authorList>
    </citation>
    <scope>NUCLEOTIDE SEQUENCE [LARGE SCALE GENOMIC DNA]</scope>
    <source>
        <strain>ATCC 25196 / NCIMB 11849 / C 71</strain>
    </source>
</reference>
<dbReference type="EC" id="5.2.1.8" evidence="1"/>
<dbReference type="EMBL" id="CP000103">
    <property type="protein sequence ID" value="ABB75632.1"/>
    <property type="molecule type" value="Genomic_DNA"/>
</dbReference>
<dbReference type="RefSeq" id="WP_011381635.1">
    <property type="nucleotide sequence ID" value="NC_007614.1"/>
</dbReference>
<dbReference type="SMR" id="Q2Y6I9"/>
<dbReference type="STRING" id="323848.Nmul_A2341"/>
<dbReference type="KEGG" id="nmu:Nmul_A2341"/>
<dbReference type="eggNOG" id="COG0544">
    <property type="taxonomic scope" value="Bacteria"/>
</dbReference>
<dbReference type="HOGENOM" id="CLU_033058_2_0_4"/>
<dbReference type="OrthoDB" id="9767721at2"/>
<dbReference type="Proteomes" id="UP000002718">
    <property type="component" value="Chromosome"/>
</dbReference>
<dbReference type="GO" id="GO:0005737">
    <property type="term" value="C:cytoplasm"/>
    <property type="evidence" value="ECO:0007669"/>
    <property type="project" value="UniProtKB-SubCell"/>
</dbReference>
<dbReference type="GO" id="GO:0003755">
    <property type="term" value="F:peptidyl-prolyl cis-trans isomerase activity"/>
    <property type="evidence" value="ECO:0007669"/>
    <property type="project" value="UniProtKB-UniRule"/>
</dbReference>
<dbReference type="GO" id="GO:0044183">
    <property type="term" value="F:protein folding chaperone"/>
    <property type="evidence" value="ECO:0007669"/>
    <property type="project" value="TreeGrafter"/>
</dbReference>
<dbReference type="GO" id="GO:0043022">
    <property type="term" value="F:ribosome binding"/>
    <property type="evidence" value="ECO:0007669"/>
    <property type="project" value="TreeGrafter"/>
</dbReference>
<dbReference type="GO" id="GO:0051083">
    <property type="term" value="P:'de novo' cotranslational protein folding"/>
    <property type="evidence" value="ECO:0007669"/>
    <property type="project" value="TreeGrafter"/>
</dbReference>
<dbReference type="GO" id="GO:0051301">
    <property type="term" value="P:cell division"/>
    <property type="evidence" value="ECO:0007669"/>
    <property type="project" value="UniProtKB-KW"/>
</dbReference>
<dbReference type="GO" id="GO:0061077">
    <property type="term" value="P:chaperone-mediated protein folding"/>
    <property type="evidence" value="ECO:0007669"/>
    <property type="project" value="TreeGrafter"/>
</dbReference>
<dbReference type="GO" id="GO:0015031">
    <property type="term" value="P:protein transport"/>
    <property type="evidence" value="ECO:0007669"/>
    <property type="project" value="UniProtKB-UniRule"/>
</dbReference>
<dbReference type="GO" id="GO:0043335">
    <property type="term" value="P:protein unfolding"/>
    <property type="evidence" value="ECO:0007669"/>
    <property type="project" value="TreeGrafter"/>
</dbReference>
<dbReference type="FunFam" id="3.10.50.40:FF:000001">
    <property type="entry name" value="Trigger factor"/>
    <property type="match status" value="1"/>
</dbReference>
<dbReference type="Gene3D" id="3.10.50.40">
    <property type="match status" value="1"/>
</dbReference>
<dbReference type="Gene3D" id="3.30.70.1050">
    <property type="entry name" value="Trigger factor ribosome-binding domain"/>
    <property type="match status" value="1"/>
</dbReference>
<dbReference type="Gene3D" id="1.10.3120.10">
    <property type="entry name" value="Trigger factor, C-terminal domain"/>
    <property type="match status" value="1"/>
</dbReference>
<dbReference type="HAMAP" id="MF_00303">
    <property type="entry name" value="Trigger_factor_Tig"/>
    <property type="match status" value="1"/>
</dbReference>
<dbReference type="InterPro" id="IPR046357">
    <property type="entry name" value="PPIase_dom_sf"/>
</dbReference>
<dbReference type="InterPro" id="IPR001179">
    <property type="entry name" value="PPIase_FKBP_dom"/>
</dbReference>
<dbReference type="InterPro" id="IPR005215">
    <property type="entry name" value="Trig_fac"/>
</dbReference>
<dbReference type="InterPro" id="IPR008880">
    <property type="entry name" value="Trigger_fac_C"/>
</dbReference>
<dbReference type="InterPro" id="IPR037041">
    <property type="entry name" value="Trigger_fac_C_sf"/>
</dbReference>
<dbReference type="InterPro" id="IPR008881">
    <property type="entry name" value="Trigger_fac_ribosome-bd_bac"/>
</dbReference>
<dbReference type="InterPro" id="IPR036611">
    <property type="entry name" value="Trigger_fac_ribosome-bd_sf"/>
</dbReference>
<dbReference type="InterPro" id="IPR027304">
    <property type="entry name" value="Trigger_fact/SurA_dom_sf"/>
</dbReference>
<dbReference type="NCBIfam" id="TIGR00115">
    <property type="entry name" value="tig"/>
    <property type="match status" value="1"/>
</dbReference>
<dbReference type="PANTHER" id="PTHR30560">
    <property type="entry name" value="TRIGGER FACTOR CHAPERONE AND PEPTIDYL-PROLYL CIS/TRANS ISOMERASE"/>
    <property type="match status" value="1"/>
</dbReference>
<dbReference type="PANTHER" id="PTHR30560:SF3">
    <property type="entry name" value="TRIGGER FACTOR-LIKE PROTEIN TIG, CHLOROPLASTIC"/>
    <property type="match status" value="1"/>
</dbReference>
<dbReference type="Pfam" id="PF00254">
    <property type="entry name" value="FKBP_C"/>
    <property type="match status" value="1"/>
</dbReference>
<dbReference type="Pfam" id="PF05698">
    <property type="entry name" value="Trigger_C"/>
    <property type="match status" value="1"/>
</dbReference>
<dbReference type="Pfam" id="PF05697">
    <property type="entry name" value="Trigger_N"/>
    <property type="match status" value="1"/>
</dbReference>
<dbReference type="PIRSF" id="PIRSF003095">
    <property type="entry name" value="Trigger_factor"/>
    <property type="match status" value="1"/>
</dbReference>
<dbReference type="SUPFAM" id="SSF54534">
    <property type="entry name" value="FKBP-like"/>
    <property type="match status" value="1"/>
</dbReference>
<dbReference type="SUPFAM" id="SSF109998">
    <property type="entry name" value="Triger factor/SurA peptide-binding domain-like"/>
    <property type="match status" value="1"/>
</dbReference>
<dbReference type="SUPFAM" id="SSF102735">
    <property type="entry name" value="Trigger factor ribosome-binding domain"/>
    <property type="match status" value="1"/>
</dbReference>
<dbReference type="PROSITE" id="PS50059">
    <property type="entry name" value="FKBP_PPIASE"/>
    <property type="match status" value="1"/>
</dbReference>
<protein>
    <recommendedName>
        <fullName evidence="1">Trigger factor</fullName>
        <shortName evidence="1">TF</shortName>
        <ecNumber evidence="1">5.2.1.8</ecNumber>
    </recommendedName>
    <alternativeName>
        <fullName evidence="1">PPIase</fullName>
    </alternativeName>
</protein>
<keyword id="KW-0131">Cell cycle</keyword>
<keyword id="KW-0132">Cell division</keyword>
<keyword id="KW-0143">Chaperone</keyword>
<keyword id="KW-0963">Cytoplasm</keyword>
<keyword id="KW-0413">Isomerase</keyword>
<keyword id="KW-1185">Reference proteome</keyword>
<keyword id="KW-0697">Rotamase</keyword>
<gene>
    <name evidence="1" type="primary">tig</name>
    <name type="ordered locus">Nmul_A2341</name>
</gene>
<organism>
    <name type="scientific">Nitrosospira multiformis (strain ATCC 25196 / NCIMB 11849 / C 71)</name>
    <dbReference type="NCBI Taxonomy" id="323848"/>
    <lineage>
        <taxon>Bacteria</taxon>
        <taxon>Pseudomonadati</taxon>
        <taxon>Pseudomonadota</taxon>
        <taxon>Betaproteobacteria</taxon>
        <taxon>Nitrosomonadales</taxon>
        <taxon>Nitrosomonadaceae</taxon>
        <taxon>Nitrosospira</taxon>
    </lineage>
</organism>
<sequence>MQTNVENLGALERRLNVSVPQEKIETEVESRLKRLARTAKFHGFRPGKVPLKIVAQQYGPQVRQEVMEDVLKKNFSEAVRENNLRVAGYPRFEPKLAESDTAQVEFSATFEVYPDITLGDLGGAHIERPVVEVTPADVDKTLEVLRKQRVEFEPVDRPAQAGDRINIDYRGLIDGAEFAGGKAENFSLVLGEGRLLKDFEEPLLGMSPGQSKTFEVAFPSDYHGKEVAGKTAVFEVKLSGVESSKLPEVNADFATSLGIAEGDVEKMRSEIRANLEREAAKRVNARLKEQVMQVLIDTTSNIDPPKALVEMELDRLMEDARNDFASRGLDTKNFSLPHDMLQERAQHRVKLGLILGELVKMHNLHPKPEQVRAVVEDLAQAYENPAEVVSWHYAAPERLREAESAALEDNVVTWVLEKAVVTGKPMPLDELMGRS</sequence>
<feature type="chain" id="PRO_0000256583" description="Trigger factor">
    <location>
        <begin position="1"/>
        <end position="435"/>
    </location>
</feature>
<feature type="domain" description="PPIase FKBP-type" evidence="1">
    <location>
        <begin position="162"/>
        <end position="247"/>
    </location>
</feature>
<evidence type="ECO:0000255" key="1">
    <source>
        <dbReference type="HAMAP-Rule" id="MF_00303"/>
    </source>
</evidence>
<accession>Q2Y6I9</accession>
<name>TIG_NITMU</name>